<proteinExistence type="inferred from homology"/>
<dbReference type="EMBL" id="AE000520">
    <property type="protein sequence ID" value="AAC65665.1"/>
    <property type="molecule type" value="Genomic_DNA"/>
</dbReference>
<dbReference type="PIR" id="B71293">
    <property type="entry name" value="B71293"/>
</dbReference>
<dbReference type="RefSeq" id="WP_010882138.1">
    <property type="nucleotide sequence ID" value="NC_021490.2"/>
</dbReference>
<dbReference type="SMR" id="O83691"/>
<dbReference type="IntAct" id="O83691">
    <property type="interactions" value="1"/>
</dbReference>
<dbReference type="STRING" id="243276.TP_0693"/>
<dbReference type="EnsemblBacteria" id="AAC65665">
    <property type="protein sequence ID" value="AAC65665"/>
    <property type="gene ID" value="TP_0693"/>
</dbReference>
<dbReference type="KEGG" id="tpa:TP_0693"/>
<dbReference type="KEGG" id="tpw:TPANIC_0693"/>
<dbReference type="eggNOG" id="ENOG5031CGG">
    <property type="taxonomic scope" value="Bacteria"/>
</dbReference>
<dbReference type="HOGENOM" id="CLU_622461_0_0_12"/>
<dbReference type="OrthoDB" id="356746at2"/>
<dbReference type="Proteomes" id="UP000000811">
    <property type="component" value="Chromosome"/>
</dbReference>
<dbReference type="GO" id="GO:0005886">
    <property type="term" value="C:plasma membrane"/>
    <property type="evidence" value="ECO:0007669"/>
    <property type="project" value="UniProtKB-SubCell"/>
</dbReference>
<dbReference type="PROSITE" id="PS51257">
    <property type="entry name" value="PROKAR_LIPOPROTEIN"/>
    <property type="match status" value="1"/>
</dbReference>
<comment type="subcellular location">
    <subcellularLocation>
        <location evidence="1">Cell membrane</location>
        <topology evidence="1">Lipid-anchor</topology>
    </subcellularLocation>
</comment>
<organism>
    <name type="scientific">Treponema pallidum (strain Nichols)</name>
    <dbReference type="NCBI Taxonomy" id="243276"/>
    <lineage>
        <taxon>Bacteria</taxon>
        <taxon>Pseudomonadati</taxon>
        <taxon>Spirochaetota</taxon>
        <taxon>Spirochaetia</taxon>
        <taxon>Spirochaetales</taxon>
        <taxon>Treponemataceae</taxon>
        <taxon>Treponema</taxon>
    </lineage>
</organism>
<evidence type="ECO:0000255" key="1">
    <source>
        <dbReference type="PROSITE-ProRule" id="PRU00303"/>
    </source>
</evidence>
<evidence type="ECO:0000256" key="2">
    <source>
        <dbReference type="SAM" id="MobiDB-lite"/>
    </source>
</evidence>
<keyword id="KW-1003">Cell membrane</keyword>
<keyword id="KW-0449">Lipoprotein</keyword>
<keyword id="KW-0472">Membrane</keyword>
<keyword id="KW-0564">Palmitate</keyword>
<keyword id="KW-1185">Reference proteome</keyword>
<keyword id="KW-0732">Signal</keyword>
<accession>O83691</accession>
<reference key="1">
    <citation type="journal article" date="1998" name="Science">
        <title>Complete genome sequence of Treponema pallidum, the syphilis spirochete.</title>
        <authorList>
            <person name="Fraser C.M."/>
            <person name="Norris S.J."/>
            <person name="Weinstock G.M."/>
            <person name="White O."/>
            <person name="Sutton G.G."/>
            <person name="Dodson R.J."/>
            <person name="Gwinn M.L."/>
            <person name="Hickey E.K."/>
            <person name="Clayton R.A."/>
            <person name="Ketchum K.A."/>
            <person name="Sodergren E."/>
            <person name="Hardham J.M."/>
            <person name="McLeod M.P."/>
            <person name="Salzberg S.L."/>
            <person name="Peterson J.D."/>
            <person name="Khalak H.G."/>
            <person name="Richardson D.L."/>
            <person name="Howell J.K."/>
            <person name="Chidambaram M."/>
            <person name="Utterback T.R."/>
            <person name="McDonald L.A."/>
            <person name="Artiach P."/>
            <person name="Bowman C."/>
            <person name="Cotton M.D."/>
            <person name="Fujii C."/>
            <person name="Garland S.A."/>
            <person name="Hatch B."/>
            <person name="Horst K."/>
            <person name="Roberts K.M."/>
            <person name="Sandusky M."/>
            <person name="Weidman J.F."/>
            <person name="Smith H.O."/>
            <person name="Venter J.C."/>
        </authorList>
    </citation>
    <scope>NUCLEOTIDE SEQUENCE [LARGE SCALE GENOMIC DNA]</scope>
    <source>
        <strain>Nichols</strain>
    </source>
</reference>
<sequence>MDRFFCTVWVWSVLFGACTSQTRSSFSLNADGLNSSGVAHASEHVSHAAAMGNEAGAADASVSESPASFSPGRGSAWVQGTVGHIPAEHHAALQAFFDTEEGMRITDALCTGDTYAAFNELEALYDPSSETDTARSRALHAYVRALLQGIRLAPRVAPPTHVGVSATLQYRDSVWPLQRGRFTLCYQIGPEHGDVMQVTLCADTQGVLFFPFPSAALSQEVTLSFDTAALVHAPSLCAQDSALQERPSSPEPVVSTIPSPEGEENSAAGEPALANLVCRVAAPSSDPKQHPVRRQVSTTICILDYGKTGRPLTHENLTATRLLGGLLKRRFVNIGLDSLYGVGKVPDHAVIARARKKFGGNVRRLVFGLTQVRRLERDSDARWKCVLFAQLHVWDFPKGAYTHHFTAQCTETGDTESQSYVRARTRMGETVLSDVLQCFL</sequence>
<name>Y693_TREPA</name>
<protein>
    <recommendedName>
        <fullName>Uncharacterized lipoprotein TP_0693</fullName>
    </recommendedName>
</protein>
<feature type="signal peptide" evidence="1">
    <location>
        <begin position="1"/>
        <end position="17"/>
    </location>
</feature>
<feature type="chain" id="PRO_0000014254" description="Uncharacterized lipoprotein TP_0693">
    <location>
        <begin position="18"/>
        <end position="440"/>
    </location>
</feature>
<feature type="region of interest" description="Disordered" evidence="2">
    <location>
        <begin position="241"/>
        <end position="268"/>
    </location>
</feature>
<feature type="lipid moiety-binding region" description="N-palmitoyl cysteine" evidence="1">
    <location>
        <position position="18"/>
    </location>
</feature>
<feature type="lipid moiety-binding region" description="S-diacylglycerol cysteine" evidence="1">
    <location>
        <position position="18"/>
    </location>
</feature>
<gene>
    <name type="ordered locus">TP_0693</name>
</gene>